<protein>
    <recommendedName>
        <fullName evidence="1">Probable GTP-binding protein EngB</fullName>
    </recommendedName>
</protein>
<dbReference type="EMBL" id="CP001120">
    <property type="protein sequence ID" value="ACF66444.1"/>
    <property type="molecule type" value="Genomic_DNA"/>
</dbReference>
<dbReference type="SMR" id="B4TBT8"/>
<dbReference type="KEGG" id="seh:SeHA_C4329"/>
<dbReference type="HOGENOM" id="CLU_033732_1_0_6"/>
<dbReference type="Proteomes" id="UP000001866">
    <property type="component" value="Chromosome"/>
</dbReference>
<dbReference type="GO" id="GO:0005829">
    <property type="term" value="C:cytosol"/>
    <property type="evidence" value="ECO:0007669"/>
    <property type="project" value="TreeGrafter"/>
</dbReference>
<dbReference type="GO" id="GO:0005525">
    <property type="term" value="F:GTP binding"/>
    <property type="evidence" value="ECO:0007669"/>
    <property type="project" value="UniProtKB-UniRule"/>
</dbReference>
<dbReference type="GO" id="GO:0046872">
    <property type="term" value="F:metal ion binding"/>
    <property type="evidence" value="ECO:0007669"/>
    <property type="project" value="UniProtKB-KW"/>
</dbReference>
<dbReference type="GO" id="GO:0000917">
    <property type="term" value="P:division septum assembly"/>
    <property type="evidence" value="ECO:0007669"/>
    <property type="project" value="UniProtKB-KW"/>
</dbReference>
<dbReference type="CDD" id="cd01876">
    <property type="entry name" value="YihA_EngB"/>
    <property type="match status" value="1"/>
</dbReference>
<dbReference type="FunFam" id="3.40.50.300:FF:000098">
    <property type="entry name" value="Probable GTP-binding protein EngB"/>
    <property type="match status" value="1"/>
</dbReference>
<dbReference type="Gene3D" id="3.40.50.300">
    <property type="entry name" value="P-loop containing nucleotide triphosphate hydrolases"/>
    <property type="match status" value="1"/>
</dbReference>
<dbReference type="HAMAP" id="MF_00321">
    <property type="entry name" value="GTPase_EngB"/>
    <property type="match status" value="1"/>
</dbReference>
<dbReference type="InterPro" id="IPR030393">
    <property type="entry name" value="G_ENGB_dom"/>
</dbReference>
<dbReference type="InterPro" id="IPR006073">
    <property type="entry name" value="GTP-bd"/>
</dbReference>
<dbReference type="InterPro" id="IPR019987">
    <property type="entry name" value="GTP-bd_ribosome_bio_YsxC"/>
</dbReference>
<dbReference type="InterPro" id="IPR027417">
    <property type="entry name" value="P-loop_NTPase"/>
</dbReference>
<dbReference type="NCBIfam" id="TIGR03598">
    <property type="entry name" value="GTPase_YsxC"/>
    <property type="match status" value="1"/>
</dbReference>
<dbReference type="PANTHER" id="PTHR11649:SF13">
    <property type="entry name" value="ENGB-TYPE G DOMAIN-CONTAINING PROTEIN"/>
    <property type="match status" value="1"/>
</dbReference>
<dbReference type="PANTHER" id="PTHR11649">
    <property type="entry name" value="MSS1/TRME-RELATED GTP-BINDING PROTEIN"/>
    <property type="match status" value="1"/>
</dbReference>
<dbReference type="Pfam" id="PF01926">
    <property type="entry name" value="MMR_HSR1"/>
    <property type="match status" value="1"/>
</dbReference>
<dbReference type="SUPFAM" id="SSF52540">
    <property type="entry name" value="P-loop containing nucleoside triphosphate hydrolases"/>
    <property type="match status" value="1"/>
</dbReference>
<dbReference type="PROSITE" id="PS51706">
    <property type="entry name" value="G_ENGB"/>
    <property type="match status" value="1"/>
</dbReference>
<keyword id="KW-0131">Cell cycle</keyword>
<keyword id="KW-0132">Cell division</keyword>
<keyword id="KW-0342">GTP-binding</keyword>
<keyword id="KW-0460">Magnesium</keyword>
<keyword id="KW-0479">Metal-binding</keyword>
<keyword id="KW-0547">Nucleotide-binding</keyword>
<keyword id="KW-0717">Septation</keyword>
<sequence length="210" mass="23554">MTNLNYQQTHFVMSAPDIRHLPSDCGIEVAFAGRSNAGKSSALNTLTNQKSLARTSKTPGRTQLINLFEVVDGKRLVDLPGYGYAEVPEEMKRKWQRALGEYLEKRQSLQGLVVLMDIRHPLKDLDQQMIQWAVESNIQVLVLLTKADKLASGARKAQLNMVREAVLAFNGDVQVEAFSSLKKQGVDKLRQKLDSWFSELAPVEEIQDGE</sequence>
<reference key="1">
    <citation type="journal article" date="2011" name="J. Bacteriol.">
        <title>Comparative genomics of 28 Salmonella enterica isolates: evidence for CRISPR-mediated adaptive sublineage evolution.</title>
        <authorList>
            <person name="Fricke W.F."/>
            <person name="Mammel M.K."/>
            <person name="McDermott P.F."/>
            <person name="Tartera C."/>
            <person name="White D.G."/>
            <person name="Leclerc J.E."/>
            <person name="Ravel J."/>
            <person name="Cebula T.A."/>
        </authorList>
    </citation>
    <scope>NUCLEOTIDE SEQUENCE [LARGE SCALE GENOMIC DNA]</scope>
    <source>
        <strain>SL476</strain>
    </source>
</reference>
<organism>
    <name type="scientific">Salmonella heidelberg (strain SL476)</name>
    <dbReference type="NCBI Taxonomy" id="454169"/>
    <lineage>
        <taxon>Bacteria</taxon>
        <taxon>Pseudomonadati</taxon>
        <taxon>Pseudomonadota</taxon>
        <taxon>Gammaproteobacteria</taxon>
        <taxon>Enterobacterales</taxon>
        <taxon>Enterobacteriaceae</taxon>
        <taxon>Salmonella</taxon>
    </lineage>
</organism>
<evidence type="ECO:0000255" key="1">
    <source>
        <dbReference type="HAMAP-Rule" id="MF_00321"/>
    </source>
</evidence>
<name>ENGB_SALHS</name>
<comment type="function">
    <text evidence="1">Necessary for normal cell division and for the maintenance of normal septation.</text>
</comment>
<comment type="cofactor">
    <cofactor evidence="1">
        <name>Mg(2+)</name>
        <dbReference type="ChEBI" id="CHEBI:18420"/>
    </cofactor>
</comment>
<comment type="similarity">
    <text evidence="1">Belongs to the TRAFAC class TrmE-Era-EngA-EngB-Septin-like GTPase superfamily. EngB GTPase family.</text>
</comment>
<feature type="chain" id="PRO_1000116002" description="Probable GTP-binding protein EngB">
    <location>
        <begin position="1"/>
        <end position="210"/>
    </location>
</feature>
<feature type="domain" description="EngB-type G" evidence="1">
    <location>
        <begin position="25"/>
        <end position="199"/>
    </location>
</feature>
<feature type="binding site" evidence="1">
    <location>
        <begin position="33"/>
        <end position="40"/>
    </location>
    <ligand>
        <name>GTP</name>
        <dbReference type="ChEBI" id="CHEBI:37565"/>
    </ligand>
</feature>
<feature type="binding site" evidence="1">
    <location>
        <position position="40"/>
    </location>
    <ligand>
        <name>Mg(2+)</name>
        <dbReference type="ChEBI" id="CHEBI:18420"/>
    </ligand>
</feature>
<feature type="binding site" evidence="1">
    <location>
        <begin position="60"/>
        <end position="64"/>
    </location>
    <ligand>
        <name>GTP</name>
        <dbReference type="ChEBI" id="CHEBI:37565"/>
    </ligand>
</feature>
<feature type="binding site" evidence="1">
    <location>
        <position position="62"/>
    </location>
    <ligand>
        <name>Mg(2+)</name>
        <dbReference type="ChEBI" id="CHEBI:18420"/>
    </ligand>
</feature>
<feature type="binding site" evidence="1">
    <location>
        <begin position="78"/>
        <end position="81"/>
    </location>
    <ligand>
        <name>GTP</name>
        <dbReference type="ChEBI" id="CHEBI:37565"/>
    </ligand>
</feature>
<feature type="binding site" evidence="1">
    <location>
        <begin position="145"/>
        <end position="148"/>
    </location>
    <ligand>
        <name>GTP</name>
        <dbReference type="ChEBI" id="CHEBI:37565"/>
    </ligand>
</feature>
<feature type="binding site" evidence="1">
    <location>
        <begin position="178"/>
        <end position="180"/>
    </location>
    <ligand>
        <name>GTP</name>
        <dbReference type="ChEBI" id="CHEBI:37565"/>
    </ligand>
</feature>
<proteinExistence type="inferred from homology"/>
<accession>B4TBT8</accession>
<gene>
    <name evidence="1" type="primary">engB</name>
    <name type="ordered locus">SeHA_C4329</name>
</gene>